<protein>
    <recommendedName>
        <fullName evidence="1">Polyribonucleotide nucleotidyltransferase</fullName>
        <ecNumber evidence="1">2.7.7.8</ecNumber>
    </recommendedName>
    <alternativeName>
        <fullName evidence="1">Polynucleotide phosphorylase</fullName>
        <shortName evidence="1">PNPase</shortName>
    </alternativeName>
</protein>
<sequence length="701" mass="77859">MSQEKKVFKTEWANRPLSIETGQMAKQANGAVLVRYGDTVVLSTATASKEPRDGDFFPLMVNYEEKMYAAGKIPGGFKKREGRPADEATLTARLIDRPIRPLFPKGYRHDVQIINMVLSADPDCSPEMAAMIGSSMALSVSDIPFQGPIAGVNVGYIDGEYVINPTVEQKEVSRLDLEVAGHRDAVNMVEAGASEITEKEMLDAIFFGHEEIKRLVDFQQEIIDYLQPEKTEFIPKERNAEVEEKVTALTEEKGLKDAIQTFDKKEREENIDAIRDEVVAEFEDEENPDNDEVIAEVNSILNDLVKEEVRRQIADEKVRPDGRKPDEIRPLDSEVGLLPRAHGSGLFTRGQTQALSVLTLGAMSEYQLIDGLGTEEEKRFMHHYNFPNFSVGETGPVRAPGRREIGHGALGERALRYIIPDTKDFPYTVRIVSEVLESNGSSSQASICGSTLALMDAGVPIKAPVAGIAMGLVTRDDNYTILTDIQGMEDALGDMDFKVAGTEKGITAIQMDIKIDGLTREIIEEALEQARVGRLTILNHMLETIDQPRPELSAYAPKVETMTIKPEKIRDVIGPGGKKINEIIDETGVKLDIEQDGTIFIGAVDQDMINRAREIIEDITREAEVGQVYNAKVRRIEKYGTFVELFPGKDALLHISQIANQRINKVEDVLKLGDTIEVKVTEIDDKGRVNASHRALLNKED</sequence>
<dbReference type="EC" id="2.7.7.8" evidence="1"/>
<dbReference type="EMBL" id="AM295250">
    <property type="protein sequence ID" value="CAL27823.1"/>
    <property type="molecule type" value="Genomic_DNA"/>
</dbReference>
<dbReference type="RefSeq" id="WP_015900164.1">
    <property type="nucleotide sequence ID" value="NC_012121.1"/>
</dbReference>
<dbReference type="SMR" id="B9DPE0"/>
<dbReference type="GeneID" id="93793343"/>
<dbReference type="KEGG" id="sca:SCA_0914"/>
<dbReference type="eggNOG" id="COG1185">
    <property type="taxonomic scope" value="Bacteria"/>
</dbReference>
<dbReference type="HOGENOM" id="CLU_004217_2_2_9"/>
<dbReference type="OrthoDB" id="9804305at2"/>
<dbReference type="BioCyc" id="SCAR396513:SCA_RS04605-MONOMER"/>
<dbReference type="Proteomes" id="UP000000444">
    <property type="component" value="Chromosome"/>
</dbReference>
<dbReference type="GO" id="GO:0005829">
    <property type="term" value="C:cytosol"/>
    <property type="evidence" value="ECO:0007669"/>
    <property type="project" value="TreeGrafter"/>
</dbReference>
<dbReference type="GO" id="GO:0000175">
    <property type="term" value="F:3'-5'-RNA exonuclease activity"/>
    <property type="evidence" value="ECO:0007669"/>
    <property type="project" value="TreeGrafter"/>
</dbReference>
<dbReference type="GO" id="GO:0000287">
    <property type="term" value="F:magnesium ion binding"/>
    <property type="evidence" value="ECO:0007669"/>
    <property type="project" value="UniProtKB-UniRule"/>
</dbReference>
<dbReference type="GO" id="GO:0004654">
    <property type="term" value="F:polyribonucleotide nucleotidyltransferase activity"/>
    <property type="evidence" value="ECO:0007669"/>
    <property type="project" value="UniProtKB-UniRule"/>
</dbReference>
<dbReference type="GO" id="GO:0003723">
    <property type="term" value="F:RNA binding"/>
    <property type="evidence" value="ECO:0007669"/>
    <property type="project" value="UniProtKB-UniRule"/>
</dbReference>
<dbReference type="GO" id="GO:0006402">
    <property type="term" value="P:mRNA catabolic process"/>
    <property type="evidence" value="ECO:0007669"/>
    <property type="project" value="UniProtKB-UniRule"/>
</dbReference>
<dbReference type="GO" id="GO:0006396">
    <property type="term" value="P:RNA processing"/>
    <property type="evidence" value="ECO:0007669"/>
    <property type="project" value="InterPro"/>
</dbReference>
<dbReference type="CDD" id="cd02393">
    <property type="entry name" value="KH-I_PNPase"/>
    <property type="match status" value="1"/>
</dbReference>
<dbReference type="CDD" id="cd11363">
    <property type="entry name" value="RNase_PH_PNPase_1"/>
    <property type="match status" value="1"/>
</dbReference>
<dbReference type="CDD" id="cd11364">
    <property type="entry name" value="RNase_PH_PNPase_2"/>
    <property type="match status" value="1"/>
</dbReference>
<dbReference type="CDD" id="cd04472">
    <property type="entry name" value="S1_PNPase"/>
    <property type="match status" value="1"/>
</dbReference>
<dbReference type="FunFam" id="2.40.50.140:FF:000023">
    <property type="entry name" value="Polyribonucleotide nucleotidyltransferase"/>
    <property type="match status" value="1"/>
</dbReference>
<dbReference type="FunFam" id="3.30.1370.10:FF:000001">
    <property type="entry name" value="Polyribonucleotide nucleotidyltransferase"/>
    <property type="match status" value="1"/>
</dbReference>
<dbReference type="FunFam" id="3.30.230.70:FF:000001">
    <property type="entry name" value="Polyribonucleotide nucleotidyltransferase"/>
    <property type="match status" value="1"/>
</dbReference>
<dbReference type="FunFam" id="3.30.230.70:FF:000002">
    <property type="entry name" value="Polyribonucleotide nucleotidyltransferase"/>
    <property type="match status" value="1"/>
</dbReference>
<dbReference type="Gene3D" id="3.30.230.70">
    <property type="entry name" value="GHMP Kinase, N-terminal domain"/>
    <property type="match status" value="2"/>
</dbReference>
<dbReference type="Gene3D" id="3.30.1370.10">
    <property type="entry name" value="K Homology domain, type 1"/>
    <property type="match status" value="1"/>
</dbReference>
<dbReference type="Gene3D" id="2.40.50.140">
    <property type="entry name" value="Nucleic acid-binding proteins"/>
    <property type="match status" value="1"/>
</dbReference>
<dbReference type="HAMAP" id="MF_01595">
    <property type="entry name" value="PNPase"/>
    <property type="match status" value="1"/>
</dbReference>
<dbReference type="InterPro" id="IPR001247">
    <property type="entry name" value="ExoRNase_PH_dom1"/>
</dbReference>
<dbReference type="InterPro" id="IPR015847">
    <property type="entry name" value="ExoRNase_PH_dom2"/>
</dbReference>
<dbReference type="InterPro" id="IPR036345">
    <property type="entry name" value="ExoRNase_PH_dom2_sf"/>
</dbReference>
<dbReference type="InterPro" id="IPR004087">
    <property type="entry name" value="KH_dom"/>
</dbReference>
<dbReference type="InterPro" id="IPR004088">
    <property type="entry name" value="KH_dom_type_1"/>
</dbReference>
<dbReference type="InterPro" id="IPR036612">
    <property type="entry name" value="KH_dom_type_1_sf"/>
</dbReference>
<dbReference type="InterPro" id="IPR012340">
    <property type="entry name" value="NA-bd_OB-fold"/>
</dbReference>
<dbReference type="InterPro" id="IPR012162">
    <property type="entry name" value="PNPase"/>
</dbReference>
<dbReference type="InterPro" id="IPR027408">
    <property type="entry name" value="PNPase/RNase_PH_dom_sf"/>
</dbReference>
<dbReference type="InterPro" id="IPR015848">
    <property type="entry name" value="PNPase_PH_RNA-bd_bac/org-type"/>
</dbReference>
<dbReference type="InterPro" id="IPR036456">
    <property type="entry name" value="PNPase_PH_RNA-bd_sf"/>
</dbReference>
<dbReference type="InterPro" id="IPR020568">
    <property type="entry name" value="Ribosomal_Su5_D2-typ_SF"/>
</dbReference>
<dbReference type="InterPro" id="IPR003029">
    <property type="entry name" value="S1_domain"/>
</dbReference>
<dbReference type="NCBIfam" id="TIGR03591">
    <property type="entry name" value="polynuc_phos"/>
    <property type="match status" value="1"/>
</dbReference>
<dbReference type="NCBIfam" id="NF008805">
    <property type="entry name" value="PRK11824.1"/>
    <property type="match status" value="1"/>
</dbReference>
<dbReference type="PANTHER" id="PTHR11252">
    <property type="entry name" value="POLYRIBONUCLEOTIDE NUCLEOTIDYLTRANSFERASE"/>
    <property type="match status" value="1"/>
</dbReference>
<dbReference type="PANTHER" id="PTHR11252:SF0">
    <property type="entry name" value="POLYRIBONUCLEOTIDE NUCLEOTIDYLTRANSFERASE 1, MITOCHONDRIAL"/>
    <property type="match status" value="1"/>
</dbReference>
<dbReference type="Pfam" id="PF00013">
    <property type="entry name" value="KH_1"/>
    <property type="match status" value="1"/>
</dbReference>
<dbReference type="Pfam" id="PF03726">
    <property type="entry name" value="PNPase"/>
    <property type="match status" value="1"/>
</dbReference>
<dbReference type="Pfam" id="PF01138">
    <property type="entry name" value="RNase_PH"/>
    <property type="match status" value="2"/>
</dbReference>
<dbReference type="Pfam" id="PF03725">
    <property type="entry name" value="RNase_PH_C"/>
    <property type="match status" value="2"/>
</dbReference>
<dbReference type="Pfam" id="PF00575">
    <property type="entry name" value="S1"/>
    <property type="match status" value="1"/>
</dbReference>
<dbReference type="PIRSF" id="PIRSF005499">
    <property type="entry name" value="PNPase"/>
    <property type="match status" value="1"/>
</dbReference>
<dbReference type="SMART" id="SM00322">
    <property type="entry name" value="KH"/>
    <property type="match status" value="1"/>
</dbReference>
<dbReference type="SMART" id="SM00316">
    <property type="entry name" value="S1"/>
    <property type="match status" value="1"/>
</dbReference>
<dbReference type="SUPFAM" id="SSF54791">
    <property type="entry name" value="Eukaryotic type KH-domain (KH-domain type I)"/>
    <property type="match status" value="1"/>
</dbReference>
<dbReference type="SUPFAM" id="SSF50249">
    <property type="entry name" value="Nucleic acid-binding proteins"/>
    <property type="match status" value="1"/>
</dbReference>
<dbReference type="SUPFAM" id="SSF46915">
    <property type="entry name" value="Polynucleotide phosphorylase/guanosine pentaphosphate synthase (PNPase/GPSI), domain 3"/>
    <property type="match status" value="1"/>
</dbReference>
<dbReference type="SUPFAM" id="SSF55666">
    <property type="entry name" value="Ribonuclease PH domain 2-like"/>
    <property type="match status" value="2"/>
</dbReference>
<dbReference type="SUPFAM" id="SSF54211">
    <property type="entry name" value="Ribosomal protein S5 domain 2-like"/>
    <property type="match status" value="2"/>
</dbReference>
<dbReference type="PROSITE" id="PS50084">
    <property type="entry name" value="KH_TYPE_1"/>
    <property type="match status" value="1"/>
</dbReference>
<dbReference type="PROSITE" id="PS50126">
    <property type="entry name" value="S1"/>
    <property type="match status" value="1"/>
</dbReference>
<gene>
    <name evidence="1" type="primary">pnp</name>
    <name type="ordered locus">Sca_0914</name>
</gene>
<reference key="1">
    <citation type="journal article" date="2009" name="Appl. Environ. Microbiol.">
        <title>Genome analysis of the meat starter culture bacterium Staphylococcus carnosus TM300.</title>
        <authorList>
            <person name="Rosenstein R."/>
            <person name="Nerz C."/>
            <person name="Biswas L."/>
            <person name="Resch A."/>
            <person name="Raddatz G."/>
            <person name="Schuster S.C."/>
            <person name="Goetz F."/>
        </authorList>
    </citation>
    <scope>NUCLEOTIDE SEQUENCE [LARGE SCALE GENOMIC DNA]</scope>
    <source>
        <strain>TM300</strain>
    </source>
</reference>
<evidence type="ECO:0000255" key="1">
    <source>
        <dbReference type="HAMAP-Rule" id="MF_01595"/>
    </source>
</evidence>
<feature type="chain" id="PRO_1000185751" description="Polyribonucleotide nucleotidyltransferase">
    <location>
        <begin position="1"/>
        <end position="701"/>
    </location>
</feature>
<feature type="domain" description="KH" evidence="1">
    <location>
        <begin position="557"/>
        <end position="616"/>
    </location>
</feature>
<feature type="domain" description="S1 motif" evidence="1">
    <location>
        <begin position="626"/>
        <end position="694"/>
    </location>
</feature>
<feature type="binding site" evidence="1">
    <location>
        <position position="490"/>
    </location>
    <ligand>
        <name>Mg(2+)</name>
        <dbReference type="ChEBI" id="CHEBI:18420"/>
    </ligand>
</feature>
<feature type="binding site" evidence="1">
    <location>
        <position position="496"/>
    </location>
    <ligand>
        <name>Mg(2+)</name>
        <dbReference type="ChEBI" id="CHEBI:18420"/>
    </ligand>
</feature>
<keyword id="KW-0963">Cytoplasm</keyword>
<keyword id="KW-0460">Magnesium</keyword>
<keyword id="KW-0479">Metal-binding</keyword>
<keyword id="KW-0548">Nucleotidyltransferase</keyword>
<keyword id="KW-1185">Reference proteome</keyword>
<keyword id="KW-0694">RNA-binding</keyword>
<keyword id="KW-0808">Transferase</keyword>
<name>PNP_STACT</name>
<accession>B9DPE0</accession>
<comment type="function">
    <text evidence="1">Involved in mRNA degradation. Catalyzes the phosphorolysis of single-stranded polyribonucleotides processively in the 3'- to 5'-direction.</text>
</comment>
<comment type="catalytic activity">
    <reaction evidence="1">
        <text>RNA(n+1) + phosphate = RNA(n) + a ribonucleoside 5'-diphosphate</text>
        <dbReference type="Rhea" id="RHEA:22096"/>
        <dbReference type="Rhea" id="RHEA-COMP:14527"/>
        <dbReference type="Rhea" id="RHEA-COMP:17342"/>
        <dbReference type="ChEBI" id="CHEBI:43474"/>
        <dbReference type="ChEBI" id="CHEBI:57930"/>
        <dbReference type="ChEBI" id="CHEBI:140395"/>
        <dbReference type="EC" id="2.7.7.8"/>
    </reaction>
</comment>
<comment type="cofactor">
    <cofactor evidence="1">
        <name>Mg(2+)</name>
        <dbReference type="ChEBI" id="CHEBI:18420"/>
    </cofactor>
</comment>
<comment type="subcellular location">
    <subcellularLocation>
        <location evidence="1">Cytoplasm</location>
    </subcellularLocation>
</comment>
<comment type="similarity">
    <text evidence="1">Belongs to the polyribonucleotide nucleotidyltransferase family.</text>
</comment>
<organism>
    <name type="scientific">Staphylococcus carnosus (strain TM300)</name>
    <dbReference type="NCBI Taxonomy" id="396513"/>
    <lineage>
        <taxon>Bacteria</taxon>
        <taxon>Bacillati</taxon>
        <taxon>Bacillota</taxon>
        <taxon>Bacilli</taxon>
        <taxon>Bacillales</taxon>
        <taxon>Staphylococcaceae</taxon>
        <taxon>Staphylococcus</taxon>
    </lineage>
</organism>
<proteinExistence type="inferred from homology"/>